<organism>
    <name type="scientific">Koribacter versatilis (strain Ellin345)</name>
    <dbReference type="NCBI Taxonomy" id="204669"/>
    <lineage>
        <taxon>Bacteria</taxon>
        <taxon>Pseudomonadati</taxon>
        <taxon>Acidobacteriota</taxon>
        <taxon>Terriglobia</taxon>
        <taxon>Terriglobales</taxon>
        <taxon>Candidatus Korobacteraceae</taxon>
        <taxon>Candidatus Korobacter</taxon>
    </lineage>
</organism>
<accession>Q1IPC9</accession>
<gene>
    <name evidence="1" type="primary">mnmA</name>
    <name type="synonym">trmU</name>
    <name type="ordered locus">Acid345_2270</name>
</gene>
<keyword id="KW-0067">ATP-binding</keyword>
<keyword id="KW-0963">Cytoplasm</keyword>
<keyword id="KW-1015">Disulfide bond</keyword>
<keyword id="KW-0547">Nucleotide-binding</keyword>
<keyword id="KW-1185">Reference proteome</keyword>
<keyword id="KW-0694">RNA-binding</keyword>
<keyword id="KW-0808">Transferase</keyword>
<keyword id="KW-0819">tRNA processing</keyword>
<keyword id="KW-0820">tRNA-binding</keyword>
<protein>
    <recommendedName>
        <fullName evidence="1">tRNA-specific 2-thiouridylase MnmA</fullName>
        <ecNumber evidence="1">2.8.1.13</ecNumber>
    </recommendedName>
</protein>
<comment type="function">
    <text evidence="1">Catalyzes the 2-thiolation of uridine at the wobble position (U34) of tRNA, leading to the formation of s(2)U34.</text>
</comment>
<comment type="catalytic activity">
    <reaction evidence="1">
        <text>S-sulfanyl-L-cysteinyl-[protein] + uridine(34) in tRNA + AH2 + ATP = 2-thiouridine(34) in tRNA + L-cysteinyl-[protein] + A + AMP + diphosphate + H(+)</text>
        <dbReference type="Rhea" id="RHEA:47032"/>
        <dbReference type="Rhea" id="RHEA-COMP:10131"/>
        <dbReference type="Rhea" id="RHEA-COMP:11726"/>
        <dbReference type="Rhea" id="RHEA-COMP:11727"/>
        <dbReference type="Rhea" id="RHEA-COMP:11728"/>
        <dbReference type="ChEBI" id="CHEBI:13193"/>
        <dbReference type="ChEBI" id="CHEBI:15378"/>
        <dbReference type="ChEBI" id="CHEBI:17499"/>
        <dbReference type="ChEBI" id="CHEBI:29950"/>
        <dbReference type="ChEBI" id="CHEBI:30616"/>
        <dbReference type="ChEBI" id="CHEBI:33019"/>
        <dbReference type="ChEBI" id="CHEBI:61963"/>
        <dbReference type="ChEBI" id="CHEBI:65315"/>
        <dbReference type="ChEBI" id="CHEBI:87170"/>
        <dbReference type="ChEBI" id="CHEBI:456215"/>
        <dbReference type="EC" id="2.8.1.13"/>
    </reaction>
</comment>
<comment type="subcellular location">
    <subcellularLocation>
        <location evidence="1">Cytoplasm</location>
    </subcellularLocation>
</comment>
<comment type="similarity">
    <text evidence="1">Belongs to the MnmA/TRMU family.</text>
</comment>
<evidence type="ECO:0000255" key="1">
    <source>
        <dbReference type="HAMAP-Rule" id="MF_00144"/>
    </source>
</evidence>
<sequence length="370" mass="41308">MNKSETIAVAMSGGVDSSTVAAMLRAEGYNLVGLTMQLWNQRRLAHHEGFGEPGVGRCCSLDDVYDARRVAETLAIPYYVVNQEDRFERDVVKPFVEDYLSGRTPIPCSLCNNHLKFDQLLRTAQQIGAEKIATGHYARNDFNAQTGRWELKRPADRAKDQTYFLFGLTQEQLSRTLFPLGHKTKPEVREDAKNHGLKLFEKPDSQEICFIPNGDYKKFLDAYLEEQGESLPDTSGELVTSSGEVVGHHTGIHNFTVGQRKGLGVATGSPLYVIELRGDKRQVVVGNNDELLTRNLRAKRMNWIAVSDLAQPMRVHAKIRHKHEPAWATIEKTGDDEVLVTFDDPQRAVTPGQAVVLYDGDVVVGGGWIC</sequence>
<name>MNMA_KORVE</name>
<feature type="chain" id="PRO_1000076556" description="tRNA-specific 2-thiouridylase MnmA">
    <location>
        <begin position="1"/>
        <end position="370"/>
    </location>
</feature>
<feature type="region of interest" description="Interaction with tRNA" evidence="1">
    <location>
        <begin position="159"/>
        <end position="161"/>
    </location>
</feature>
<feature type="active site" description="Nucleophile" evidence="1">
    <location>
        <position position="111"/>
    </location>
</feature>
<feature type="active site" description="Cysteine persulfide intermediate" evidence="1">
    <location>
        <position position="209"/>
    </location>
</feature>
<feature type="binding site" evidence="1">
    <location>
        <begin position="10"/>
        <end position="17"/>
    </location>
    <ligand>
        <name>ATP</name>
        <dbReference type="ChEBI" id="CHEBI:30616"/>
    </ligand>
</feature>
<feature type="binding site" evidence="1">
    <location>
        <position position="36"/>
    </location>
    <ligand>
        <name>ATP</name>
        <dbReference type="ChEBI" id="CHEBI:30616"/>
    </ligand>
</feature>
<feature type="binding site" evidence="1">
    <location>
        <position position="135"/>
    </location>
    <ligand>
        <name>ATP</name>
        <dbReference type="ChEBI" id="CHEBI:30616"/>
    </ligand>
</feature>
<feature type="site" description="Interaction with tRNA" evidence="1">
    <location>
        <position position="136"/>
    </location>
</feature>
<feature type="site" description="Interaction with tRNA" evidence="1">
    <location>
        <position position="353"/>
    </location>
</feature>
<feature type="disulfide bond" description="Alternate" evidence="1">
    <location>
        <begin position="111"/>
        <end position="209"/>
    </location>
</feature>
<reference key="1">
    <citation type="journal article" date="2009" name="Appl. Environ. Microbiol.">
        <title>Three genomes from the phylum Acidobacteria provide insight into the lifestyles of these microorganisms in soils.</title>
        <authorList>
            <person name="Ward N.L."/>
            <person name="Challacombe J.F."/>
            <person name="Janssen P.H."/>
            <person name="Henrissat B."/>
            <person name="Coutinho P.M."/>
            <person name="Wu M."/>
            <person name="Xie G."/>
            <person name="Haft D.H."/>
            <person name="Sait M."/>
            <person name="Badger J."/>
            <person name="Barabote R.D."/>
            <person name="Bradley B."/>
            <person name="Brettin T.S."/>
            <person name="Brinkac L.M."/>
            <person name="Bruce D."/>
            <person name="Creasy T."/>
            <person name="Daugherty S.C."/>
            <person name="Davidsen T.M."/>
            <person name="DeBoy R.T."/>
            <person name="Detter J.C."/>
            <person name="Dodson R.J."/>
            <person name="Durkin A.S."/>
            <person name="Ganapathy A."/>
            <person name="Gwinn-Giglio M."/>
            <person name="Han C.S."/>
            <person name="Khouri H."/>
            <person name="Kiss H."/>
            <person name="Kothari S.P."/>
            <person name="Madupu R."/>
            <person name="Nelson K.E."/>
            <person name="Nelson W.C."/>
            <person name="Paulsen I."/>
            <person name="Penn K."/>
            <person name="Ren Q."/>
            <person name="Rosovitz M.J."/>
            <person name="Selengut J.D."/>
            <person name="Shrivastava S."/>
            <person name="Sullivan S.A."/>
            <person name="Tapia R."/>
            <person name="Thompson L.S."/>
            <person name="Watkins K.L."/>
            <person name="Yang Q."/>
            <person name="Yu C."/>
            <person name="Zafar N."/>
            <person name="Zhou L."/>
            <person name="Kuske C.R."/>
        </authorList>
    </citation>
    <scope>NUCLEOTIDE SEQUENCE [LARGE SCALE GENOMIC DNA]</scope>
    <source>
        <strain>Ellin345</strain>
    </source>
</reference>
<dbReference type="EC" id="2.8.1.13" evidence="1"/>
<dbReference type="EMBL" id="CP000360">
    <property type="protein sequence ID" value="ABF41271.1"/>
    <property type="molecule type" value="Genomic_DNA"/>
</dbReference>
<dbReference type="RefSeq" id="WP_011523072.1">
    <property type="nucleotide sequence ID" value="NC_008009.1"/>
</dbReference>
<dbReference type="SMR" id="Q1IPC9"/>
<dbReference type="STRING" id="204669.Acid345_2270"/>
<dbReference type="EnsemblBacteria" id="ABF41271">
    <property type="protein sequence ID" value="ABF41271"/>
    <property type="gene ID" value="Acid345_2270"/>
</dbReference>
<dbReference type="KEGG" id="aba:Acid345_2270"/>
<dbReference type="eggNOG" id="COG0482">
    <property type="taxonomic scope" value="Bacteria"/>
</dbReference>
<dbReference type="HOGENOM" id="CLU_035188_0_0_0"/>
<dbReference type="OrthoDB" id="9800696at2"/>
<dbReference type="Proteomes" id="UP000002432">
    <property type="component" value="Chromosome"/>
</dbReference>
<dbReference type="GO" id="GO:0005737">
    <property type="term" value="C:cytoplasm"/>
    <property type="evidence" value="ECO:0007669"/>
    <property type="project" value="UniProtKB-SubCell"/>
</dbReference>
<dbReference type="GO" id="GO:0005524">
    <property type="term" value="F:ATP binding"/>
    <property type="evidence" value="ECO:0007669"/>
    <property type="project" value="UniProtKB-KW"/>
</dbReference>
<dbReference type="GO" id="GO:0000049">
    <property type="term" value="F:tRNA binding"/>
    <property type="evidence" value="ECO:0007669"/>
    <property type="project" value="UniProtKB-KW"/>
</dbReference>
<dbReference type="GO" id="GO:0103016">
    <property type="term" value="F:tRNA-uridine 2-sulfurtransferase activity"/>
    <property type="evidence" value="ECO:0007669"/>
    <property type="project" value="UniProtKB-EC"/>
</dbReference>
<dbReference type="GO" id="GO:0002143">
    <property type="term" value="P:tRNA wobble position uridine thiolation"/>
    <property type="evidence" value="ECO:0007669"/>
    <property type="project" value="TreeGrafter"/>
</dbReference>
<dbReference type="CDD" id="cd01998">
    <property type="entry name" value="MnmA_TRMU-like"/>
    <property type="match status" value="1"/>
</dbReference>
<dbReference type="FunFam" id="2.30.30.280:FF:000001">
    <property type="entry name" value="tRNA-specific 2-thiouridylase MnmA"/>
    <property type="match status" value="1"/>
</dbReference>
<dbReference type="FunFam" id="2.40.30.10:FF:000023">
    <property type="entry name" value="tRNA-specific 2-thiouridylase MnmA"/>
    <property type="match status" value="1"/>
</dbReference>
<dbReference type="FunFam" id="3.40.50.620:FF:000115">
    <property type="entry name" value="tRNA-specific 2-thiouridylase MnmA"/>
    <property type="match status" value="1"/>
</dbReference>
<dbReference type="Gene3D" id="2.30.30.280">
    <property type="entry name" value="Adenine nucleotide alpha hydrolases-like domains"/>
    <property type="match status" value="1"/>
</dbReference>
<dbReference type="Gene3D" id="3.40.50.620">
    <property type="entry name" value="HUPs"/>
    <property type="match status" value="1"/>
</dbReference>
<dbReference type="Gene3D" id="2.40.30.10">
    <property type="entry name" value="Translation factors"/>
    <property type="match status" value="1"/>
</dbReference>
<dbReference type="HAMAP" id="MF_00144">
    <property type="entry name" value="tRNA_thiouridyl_MnmA"/>
    <property type="match status" value="1"/>
</dbReference>
<dbReference type="InterPro" id="IPR004506">
    <property type="entry name" value="MnmA-like"/>
</dbReference>
<dbReference type="InterPro" id="IPR046885">
    <property type="entry name" value="MnmA-like_C"/>
</dbReference>
<dbReference type="InterPro" id="IPR046884">
    <property type="entry name" value="MnmA-like_central"/>
</dbReference>
<dbReference type="InterPro" id="IPR023382">
    <property type="entry name" value="MnmA-like_central_sf"/>
</dbReference>
<dbReference type="InterPro" id="IPR014729">
    <property type="entry name" value="Rossmann-like_a/b/a_fold"/>
</dbReference>
<dbReference type="NCBIfam" id="NF001138">
    <property type="entry name" value="PRK00143.1"/>
    <property type="match status" value="1"/>
</dbReference>
<dbReference type="NCBIfam" id="TIGR00420">
    <property type="entry name" value="trmU"/>
    <property type="match status" value="1"/>
</dbReference>
<dbReference type="PANTHER" id="PTHR11933:SF5">
    <property type="entry name" value="MITOCHONDRIAL TRNA-SPECIFIC 2-THIOURIDYLASE 1"/>
    <property type="match status" value="1"/>
</dbReference>
<dbReference type="PANTHER" id="PTHR11933">
    <property type="entry name" value="TRNA 5-METHYLAMINOMETHYL-2-THIOURIDYLATE -METHYLTRANSFERASE"/>
    <property type="match status" value="1"/>
</dbReference>
<dbReference type="Pfam" id="PF03054">
    <property type="entry name" value="tRNA_Me_trans"/>
    <property type="match status" value="1"/>
</dbReference>
<dbReference type="Pfam" id="PF20258">
    <property type="entry name" value="tRNA_Me_trans_C"/>
    <property type="match status" value="1"/>
</dbReference>
<dbReference type="Pfam" id="PF20259">
    <property type="entry name" value="tRNA_Me_trans_M"/>
    <property type="match status" value="1"/>
</dbReference>
<dbReference type="SUPFAM" id="SSF52402">
    <property type="entry name" value="Adenine nucleotide alpha hydrolases-like"/>
    <property type="match status" value="1"/>
</dbReference>
<proteinExistence type="inferred from homology"/>